<reference key="1">
    <citation type="journal article" date="2011" name="Stand. Genomic Sci.">
        <title>Complete genome sequence of Rhodospirillum rubrum type strain (S1).</title>
        <authorList>
            <person name="Munk A.C."/>
            <person name="Copeland A."/>
            <person name="Lucas S."/>
            <person name="Lapidus A."/>
            <person name="Del Rio T.G."/>
            <person name="Barry K."/>
            <person name="Detter J.C."/>
            <person name="Hammon N."/>
            <person name="Israni S."/>
            <person name="Pitluck S."/>
            <person name="Brettin T."/>
            <person name="Bruce D."/>
            <person name="Han C."/>
            <person name="Tapia R."/>
            <person name="Gilna P."/>
            <person name="Schmutz J."/>
            <person name="Larimer F."/>
            <person name="Land M."/>
            <person name="Kyrpides N.C."/>
            <person name="Mavromatis K."/>
            <person name="Richardson P."/>
            <person name="Rohde M."/>
            <person name="Goeker M."/>
            <person name="Klenk H.P."/>
            <person name="Zhang Y."/>
            <person name="Roberts G.P."/>
            <person name="Reslewic S."/>
            <person name="Schwartz D.C."/>
        </authorList>
    </citation>
    <scope>NUCLEOTIDE SEQUENCE [LARGE SCALE GENOMIC DNA]</scope>
    <source>
        <strain>ATCC 11170 / ATH 1.1.1 / DSM 467 / LMG 4362 / NCIMB 8255 / S1</strain>
    </source>
</reference>
<name>ARLY_RHORT</name>
<gene>
    <name evidence="1" type="primary">argH</name>
    <name type="ordered locus">Rru_A0397</name>
</gene>
<evidence type="ECO:0000255" key="1">
    <source>
        <dbReference type="HAMAP-Rule" id="MF_00006"/>
    </source>
</evidence>
<proteinExistence type="inferred from homology"/>
<dbReference type="EC" id="4.3.2.1" evidence="1"/>
<dbReference type="EMBL" id="CP000230">
    <property type="protein sequence ID" value="ABC21202.1"/>
    <property type="molecule type" value="Genomic_DNA"/>
</dbReference>
<dbReference type="RefSeq" id="WP_011388156.1">
    <property type="nucleotide sequence ID" value="NC_007643.1"/>
</dbReference>
<dbReference type="RefSeq" id="YP_425489.1">
    <property type="nucleotide sequence ID" value="NC_007643.1"/>
</dbReference>
<dbReference type="SMR" id="Q2RXE3"/>
<dbReference type="STRING" id="269796.Rru_A0397"/>
<dbReference type="EnsemblBacteria" id="ABC21202">
    <property type="protein sequence ID" value="ABC21202"/>
    <property type="gene ID" value="Rru_A0397"/>
</dbReference>
<dbReference type="KEGG" id="rru:Rru_A0397"/>
<dbReference type="PATRIC" id="fig|269796.9.peg.454"/>
<dbReference type="eggNOG" id="COG0165">
    <property type="taxonomic scope" value="Bacteria"/>
</dbReference>
<dbReference type="HOGENOM" id="CLU_027272_2_3_5"/>
<dbReference type="PhylomeDB" id="Q2RXE3"/>
<dbReference type="UniPathway" id="UPA00068">
    <property type="reaction ID" value="UER00114"/>
</dbReference>
<dbReference type="Proteomes" id="UP000001929">
    <property type="component" value="Chromosome"/>
</dbReference>
<dbReference type="GO" id="GO:0005829">
    <property type="term" value="C:cytosol"/>
    <property type="evidence" value="ECO:0007669"/>
    <property type="project" value="TreeGrafter"/>
</dbReference>
<dbReference type="GO" id="GO:0004056">
    <property type="term" value="F:argininosuccinate lyase activity"/>
    <property type="evidence" value="ECO:0007669"/>
    <property type="project" value="UniProtKB-UniRule"/>
</dbReference>
<dbReference type="GO" id="GO:0042450">
    <property type="term" value="P:arginine biosynthetic process via ornithine"/>
    <property type="evidence" value="ECO:0007669"/>
    <property type="project" value="InterPro"/>
</dbReference>
<dbReference type="GO" id="GO:0006526">
    <property type="term" value="P:L-arginine biosynthetic process"/>
    <property type="evidence" value="ECO:0007669"/>
    <property type="project" value="UniProtKB-UniRule"/>
</dbReference>
<dbReference type="CDD" id="cd01359">
    <property type="entry name" value="Argininosuccinate_lyase"/>
    <property type="match status" value="1"/>
</dbReference>
<dbReference type="FunFam" id="1.10.275.10:FF:000002">
    <property type="entry name" value="Argininosuccinate lyase"/>
    <property type="match status" value="1"/>
</dbReference>
<dbReference type="FunFam" id="1.10.40.30:FF:000001">
    <property type="entry name" value="Argininosuccinate lyase"/>
    <property type="match status" value="1"/>
</dbReference>
<dbReference type="FunFam" id="1.20.200.10:FF:000015">
    <property type="entry name" value="argininosuccinate lyase isoform X2"/>
    <property type="match status" value="1"/>
</dbReference>
<dbReference type="Gene3D" id="1.10.40.30">
    <property type="entry name" value="Fumarase/aspartase (C-terminal domain)"/>
    <property type="match status" value="1"/>
</dbReference>
<dbReference type="Gene3D" id="1.20.200.10">
    <property type="entry name" value="Fumarase/aspartase (Central domain)"/>
    <property type="match status" value="1"/>
</dbReference>
<dbReference type="Gene3D" id="1.10.275.10">
    <property type="entry name" value="Fumarase/aspartase (N-terminal domain)"/>
    <property type="match status" value="1"/>
</dbReference>
<dbReference type="HAMAP" id="MF_00006">
    <property type="entry name" value="Arg_succ_lyase"/>
    <property type="match status" value="1"/>
</dbReference>
<dbReference type="InterPro" id="IPR029419">
    <property type="entry name" value="Arg_succ_lyase_C"/>
</dbReference>
<dbReference type="InterPro" id="IPR009049">
    <property type="entry name" value="Argininosuccinate_lyase"/>
</dbReference>
<dbReference type="InterPro" id="IPR024083">
    <property type="entry name" value="Fumarase/histidase_N"/>
</dbReference>
<dbReference type="InterPro" id="IPR020557">
    <property type="entry name" value="Fumarate_lyase_CS"/>
</dbReference>
<dbReference type="InterPro" id="IPR000362">
    <property type="entry name" value="Fumarate_lyase_fam"/>
</dbReference>
<dbReference type="InterPro" id="IPR022761">
    <property type="entry name" value="Fumarate_lyase_N"/>
</dbReference>
<dbReference type="InterPro" id="IPR008948">
    <property type="entry name" value="L-Aspartase-like"/>
</dbReference>
<dbReference type="NCBIfam" id="TIGR00838">
    <property type="entry name" value="argH"/>
    <property type="match status" value="1"/>
</dbReference>
<dbReference type="PANTHER" id="PTHR43814">
    <property type="entry name" value="ARGININOSUCCINATE LYASE"/>
    <property type="match status" value="1"/>
</dbReference>
<dbReference type="PANTHER" id="PTHR43814:SF1">
    <property type="entry name" value="ARGININOSUCCINATE LYASE"/>
    <property type="match status" value="1"/>
</dbReference>
<dbReference type="Pfam" id="PF14698">
    <property type="entry name" value="ASL_C2"/>
    <property type="match status" value="1"/>
</dbReference>
<dbReference type="Pfam" id="PF00206">
    <property type="entry name" value="Lyase_1"/>
    <property type="match status" value="1"/>
</dbReference>
<dbReference type="PRINTS" id="PR00145">
    <property type="entry name" value="ARGSUCLYASE"/>
</dbReference>
<dbReference type="PRINTS" id="PR00149">
    <property type="entry name" value="FUMRATELYASE"/>
</dbReference>
<dbReference type="SUPFAM" id="SSF48557">
    <property type="entry name" value="L-aspartase-like"/>
    <property type="match status" value="1"/>
</dbReference>
<dbReference type="PROSITE" id="PS00163">
    <property type="entry name" value="FUMARATE_LYASES"/>
    <property type="match status" value="1"/>
</dbReference>
<accession>Q2RXE3</accession>
<protein>
    <recommendedName>
        <fullName evidence="1">Argininosuccinate lyase</fullName>
        <shortName evidence="1">ASAL</shortName>
        <ecNumber evidence="1">4.3.2.1</ecNumber>
    </recommendedName>
    <alternativeName>
        <fullName evidence="1">Arginosuccinase</fullName>
    </alternativeName>
</protein>
<feature type="chain" id="PRO_0000240764" description="Argininosuccinate lyase">
    <location>
        <begin position="1"/>
        <end position="478"/>
    </location>
</feature>
<sequence length="478" mass="51500">MSSSTPTTPSIERTASTIWGGRFDSGPSAVMEAINASIGFDKRLYRQDIAGSKAHCTMLVATGILSKADGEAILGGLDRILAEIEAGDFPFSVALEDIHMNIESRLKDLIGEAAGRLHTARSRNDQVATDFRLWVRDAIDGVEGALARLQDVLITRAEEHADTVMPGFTHLQAAQPVTFGHHLLAYVEMIGRDRGRFHDARVRLNESPLGSAALAGTSFPIDRAMTAQILGFDRPCANSLDGVSDRDFALEFLAAASIASIHLSRLAEELVIWTSAQFGFVRLPDAYSTGSSIMPQKRNPDAAELVRAKAGRVIGDLASLLIVMKGLPLAYSKDMQDDKEPVFEAADTLELCIAAMTGMMETITPKVDRLRTAAGQGFTTATDLADWLVRALGTPFRHAHEVSGALVKMAEKKGVGLEDLSLAEMRTIEPRLTDEAIKVLSVDWSVRSRTSFGGTAPDNVRAACAAARARYAAKAPPR</sequence>
<organism>
    <name type="scientific">Rhodospirillum rubrum (strain ATCC 11170 / ATH 1.1.1 / DSM 467 / LMG 4362 / NCIMB 8255 / S1)</name>
    <dbReference type="NCBI Taxonomy" id="269796"/>
    <lineage>
        <taxon>Bacteria</taxon>
        <taxon>Pseudomonadati</taxon>
        <taxon>Pseudomonadota</taxon>
        <taxon>Alphaproteobacteria</taxon>
        <taxon>Rhodospirillales</taxon>
        <taxon>Rhodospirillaceae</taxon>
        <taxon>Rhodospirillum</taxon>
    </lineage>
</organism>
<keyword id="KW-0028">Amino-acid biosynthesis</keyword>
<keyword id="KW-0055">Arginine biosynthesis</keyword>
<keyword id="KW-0963">Cytoplasm</keyword>
<keyword id="KW-0456">Lyase</keyword>
<keyword id="KW-1185">Reference proteome</keyword>
<comment type="catalytic activity">
    <reaction evidence="1">
        <text>2-(N(omega)-L-arginino)succinate = fumarate + L-arginine</text>
        <dbReference type="Rhea" id="RHEA:24020"/>
        <dbReference type="ChEBI" id="CHEBI:29806"/>
        <dbReference type="ChEBI" id="CHEBI:32682"/>
        <dbReference type="ChEBI" id="CHEBI:57472"/>
        <dbReference type="EC" id="4.3.2.1"/>
    </reaction>
</comment>
<comment type="pathway">
    <text evidence="1">Amino-acid biosynthesis; L-arginine biosynthesis; L-arginine from L-ornithine and carbamoyl phosphate: step 3/3.</text>
</comment>
<comment type="subcellular location">
    <subcellularLocation>
        <location evidence="1">Cytoplasm</location>
    </subcellularLocation>
</comment>
<comment type="similarity">
    <text evidence="1">Belongs to the lyase 1 family. Argininosuccinate lyase subfamily.</text>
</comment>